<protein>
    <recommendedName>
        <fullName evidence="1">tRNA-modifying protein YgfZ</fullName>
    </recommendedName>
</protein>
<dbReference type="EMBL" id="CP000026">
    <property type="protein sequence ID" value="AAV78757.1"/>
    <property type="molecule type" value="Genomic_DNA"/>
</dbReference>
<dbReference type="RefSeq" id="WP_000874176.1">
    <property type="nucleotide sequence ID" value="NC_006511.1"/>
</dbReference>
<dbReference type="SMR" id="Q5PJF4"/>
<dbReference type="KEGG" id="spt:SPA2916"/>
<dbReference type="HOGENOM" id="CLU_007884_6_1_6"/>
<dbReference type="Proteomes" id="UP000008185">
    <property type="component" value="Chromosome"/>
</dbReference>
<dbReference type="GO" id="GO:0005737">
    <property type="term" value="C:cytoplasm"/>
    <property type="evidence" value="ECO:0007669"/>
    <property type="project" value="UniProtKB-SubCell"/>
</dbReference>
<dbReference type="GO" id="GO:0005542">
    <property type="term" value="F:folic acid binding"/>
    <property type="evidence" value="ECO:0007669"/>
    <property type="project" value="UniProtKB-UniRule"/>
</dbReference>
<dbReference type="GO" id="GO:0016226">
    <property type="term" value="P:iron-sulfur cluster assembly"/>
    <property type="evidence" value="ECO:0007669"/>
    <property type="project" value="TreeGrafter"/>
</dbReference>
<dbReference type="GO" id="GO:0009451">
    <property type="term" value="P:RNA modification"/>
    <property type="evidence" value="ECO:0007669"/>
    <property type="project" value="InterPro"/>
</dbReference>
<dbReference type="GO" id="GO:0008033">
    <property type="term" value="P:tRNA processing"/>
    <property type="evidence" value="ECO:0007669"/>
    <property type="project" value="UniProtKB-UniRule"/>
</dbReference>
<dbReference type="FunFam" id="2.40.30.160:FF:000001">
    <property type="entry name" value="tRNA-modifying protein YgfZ"/>
    <property type="match status" value="1"/>
</dbReference>
<dbReference type="FunFam" id="3.30.70.1400:FF:000002">
    <property type="entry name" value="tRNA-modifying protein YgfZ"/>
    <property type="match status" value="1"/>
</dbReference>
<dbReference type="FunFam" id="3.30.70.1630:FF:000001">
    <property type="entry name" value="tRNA-modifying protein YgfZ"/>
    <property type="match status" value="1"/>
</dbReference>
<dbReference type="Gene3D" id="2.40.30.160">
    <property type="match status" value="1"/>
</dbReference>
<dbReference type="Gene3D" id="3.30.70.1630">
    <property type="match status" value="1"/>
</dbReference>
<dbReference type="Gene3D" id="3.30.70.1400">
    <property type="entry name" value="Aminomethyltransferase beta-barrel domains"/>
    <property type="match status" value="1"/>
</dbReference>
<dbReference type="HAMAP" id="MF_01175">
    <property type="entry name" value="tRNA_modifying_YgfZ"/>
    <property type="match status" value="1"/>
</dbReference>
<dbReference type="InterPro" id="IPR006222">
    <property type="entry name" value="GCV_T_N"/>
</dbReference>
<dbReference type="InterPro" id="IPR029043">
    <property type="entry name" value="GcvT/YgfZ_C"/>
</dbReference>
<dbReference type="InterPro" id="IPR023758">
    <property type="entry name" value="tRNA-modifying_YgfZ"/>
</dbReference>
<dbReference type="InterPro" id="IPR045179">
    <property type="entry name" value="YgfZ/GcvT"/>
</dbReference>
<dbReference type="InterPro" id="IPR017703">
    <property type="entry name" value="YgfZ/GcvT_CS"/>
</dbReference>
<dbReference type="InterPro" id="IPR048451">
    <property type="entry name" value="YgfZ_barrel"/>
</dbReference>
<dbReference type="NCBIfam" id="NF007110">
    <property type="entry name" value="PRK09559.1"/>
    <property type="match status" value="1"/>
</dbReference>
<dbReference type="NCBIfam" id="TIGR03317">
    <property type="entry name" value="ygfZ_signature"/>
    <property type="match status" value="1"/>
</dbReference>
<dbReference type="PANTHER" id="PTHR22602">
    <property type="entry name" value="TRANSFERASE CAF17, MITOCHONDRIAL-RELATED"/>
    <property type="match status" value="1"/>
</dbReference>
<dbReference type="PANTHER" id="PTHR22602:SF0">
    <property type="entry name" value="TRANSFERASE CAF17, MITOCHONDRIAL-RELATED"/>
    <property type="match status" value="1"/>
</dbReference>
<dbReference type="Pfam" id="PF01571">
    <property type="entry name" value="GCV_T"/>
    <property type="match status" value="1"/>
</dbReference>
<dbReference type="Pfam" id="PF21130">
    <property type="entry name" value="YgfZ_barrel"/>
    <property type="match status" value="1"/>
</dbReference>
<dbReference type="SUPFAM" id="SSF101790">
    <property type="entry name" value="Aminomethyltransferase beta-barrel domain"/>
    <property type="match status" value="1"/>
</dbReference>
<dbReference type="SUPFAM" id="SSF103025">
    <property type="entry name" value="Folate-binding domain"/>
    <property type="match status" value="1"/>
</dbReference>
<reference key="1">
    <citation type="journal article" date="2004" name="Nat. Genet.">
        <title>Comparison of genome degradation in Paratyphi A and Typhi, human-restricted serovars of Salmonella enterica that cause typhoid.</title>
        <authorList>
            <person name="McClelland M."/>
            <person name="Sanderson K.E."/>
            <person name="Clifton S.W."/>
            <person name="Latreille P."/>
            <person name="Porwollik S."/>
            <person name="Sabo A."/>
            <person name="Meyer R."/>
            <person name="Bieri T."/>
            <person name="Ozersky P."/>
            <person name="McLellan M."/>
            <person name="Harkins C.R."/>
            <person name="Wang C."/>
            <person name="Nguyen C."/>
            <person name="Berghoff A."/>
            <person name="Elliott G."/>
            <person name="Kohlberg S."/>
            <person name="Strong C."/>
            <person name="Du F."/>
            <person name="Carter J."/>
            <person name="Kremizki C."/>
            <person name="Layman D."/>
            <person name="Leonard S."/>
            <person name="Sun H."/>
            <person name="Fulton L."/>
            <person name="Nash W."/>
            <person name="Miner T."/>
            <person name="Minx P."/>
            <person name="Delehaunty K."/>
            <person name="Fronick C."/>
            <person name="Magrini V."/>
            <person name="Nhan M."/>
            <person name="Warren W."/>
            <person name="Florea L."/>
            <person name="Spieth J."/>
            <person name="Wilson R.K."/>
        </authorList>
    </citation>
    <scope>NUCLEOTIDE SEQUENCE [LARGE SCALE GENOMIC DNA]</scope>
    <source>
        <strain>ATCC 9150 / SARB42</strain>
    </source>
</reference>
<gene>
    <name evidence="1" type="primary">ygfZ</name>
    <name type="ordered locus">SPA2916</name>
</gene>
<name>YGFZ_SALPA</name>
<accession>Q5PJF4</accession>
<proteinExistence type="inferred from homology"/>
<sequence>MAFISFPPRHPSSSARLPLTLIALDDWALSTITGVDSEKYIQGQVTADVSQMTEQQHLLAAHCDAKGKMWSTLRLFRERDGFAWIERRSVREAQLTELKKYAVFSKVVIAPDDERVLLGVAGFQARAALANVFSELPNSENQVVRDGASTLLWFEHPAERFLLVTDVATANMLTEKLHGEAELNNSQQWLALDIEAGIPVIDAANSGQFIPQATNLQALGGISFKKGCYTGQEMVARAKFRGANKRALWLLAGKASRVPEAGEDLELQMGENWRRTGAILAATQLDDGQLLVQAVMNNDLEAESVFRVRDDANTLHIVPLPYSLEE</sequence>
<comment type="function">
    <text evidence="1">Folate-binding protein involved in regulating the level of ATP-DnaA and in the modification of some tRNAs. It is probably a key factor in regulatory networks that act via tRNA modification, such as initiation of chromosomal replication.</text>
</comment>
<comment type="subcellular location">
    <subcellularLocation>
        <location evidence="1">Cytoplasm</location>
    </subcellularLocation>
</comment>
<comment type="similarity">
    <text evidence="1">Belongs to the tRNA-modifying YgfZ family.</text>
</comment>
<evidence type="ECO:0000255" key="1">
    <source>
        <dbReference type="HAMAP-Rule" id="MF_01175"/>
    </source>
</evidence>
<keyword id="KW-0963">Cytoplasm</keyword>
<keyword id="KW-0290">Folate-binding</keyword>
<keyword id="KW-0819">tRNA processing</keyword>
<organism>
    <name type="scientific">Salmonella paratyphi A (strain ATCC 9150 / SARB42)</name>
    <dbReference type="NCBI Taxonomy" id="295319"/>
    <lineage>
        <taxon>Bacteria</taxon>
        <taxon>Pseudomonadati</taxon>
        <taxon>Pseudomonadota</taxon>
        <taxon>Gammaproteobacteria</taxon>
        <taxon>Enterobacterales</taxon>
        <taxon>Enterobacteriaceae</taxon>
        <taxon>Salmonella</taxon>
    </lineage>
</organism>
<feature type="chain" id="PRO_0000262896" description="tRNA-modifying protein YgfZ">
    <location>
        <begin position="1"/>
        <end position="326"/>
    </location>
</feature>
<feature type="binding site" evidence="1">
    <location>
        <position position="27"/>
    </location>
    <ligand>
        <name>folate</name>
        <dbReference type="ChEBI" id="CHEBI:62501"/>
    </ligand>
</feature>
<feature type="binding site" evidence="1">
    <location>
        <position position="189"/>
    </location>
    <ligand>
        <name>folate</name>
        <dbReference type="ChEBI" id="CHEBI:62501"/>
    </ligand>
</feature>